<name>YECR_ECOLI</name>
<accession>P76308</accession>
<accession>Q2MB06</accession>
<protein>
    <recommendedName>
        <fullName>Uncharacterized protein YecR</fullName>
    </recommendedName>
</protein>
<organism>
    <name type="scientific">Escherichia coli (strain K12)</name>
    <dbReference type="NCBI Taxonomy" id="83333"/>
    <lineage>
        <taxon>Bacteria</taxon>
        <taxon>Pseudomonadati</taxon>
        <taxon>Pseudomonadota</taxon>
        <taxon>Gammaproteobacteria</taxon>
        <taxon>Enterobacterales</taxon>
        <taxon>Enterobacteriaceae</taxon>
        <taxon>Escherichia</taxon>
    </lineage>
</organism>
<keyword id="KW-1185">Reference proteome</keyword>
<sequence>MRLLILTLSLITLAGCTVTRQAHVSEVDAATGIVRLVYDQAFLQHAHTDRYVSRGIADRACQQEGYTHAVPFGQPVGNCSLFAGSLCLNTEFTLSYQCHHSAFPVFL</sequence>
<reference key="1">
    <citation type="journal article" date="1997" name="Science">
        <title>The complete genome sequence of Escherichia coli K-12.</title>
        <authorList>
            <person name="Blattner F.R."/>
            <person name="Plunkett G. III"/>
            <person name="Bloch C.A."/>
            <person name="Perna N.T."/>
            <person name="Burland V."/>
            <person name="Riley M."/>
            <person name="Collado-Vides J."/>
            <person name="Glasner J.D."/>
            <person name="Rode C.K."/>
            <person name="Mayhew G.F."/>
            <person name="Gregor J."/>
            <person name="Davis N.W."/>
            <person name="Kirkpatrick H.A."/>
            <person name="Goeden M.A."/>
            <person name="Rose D.J."/>
            <person name="Mau B."/>
            <person name="Shao Y."/>
        </authorList>
    </citation>
    <scope>NUCLEOTIDE SEQUENCE [LARGE SCALE GENOMIC DNA]</scope>
    <source>
        <strain>K12 / MG1655 / ATCC 47076</strain>
    </source>
</reference>
<reference key="2">
    <citation type="journal article" date="2006" name="Mol. Syst. Biol.">
        <title>Highly accurate genome sequences of Escherichia coli K-12 strains MG1655 and W3110.</title>
        <authorList>
            <person name="Hayashi K."/>
            <person name="Morooka N."/>
            <person name="Yamamoto Y."/>
            <person name="Fujita K."/>
            <person name="Isono K."/>
            <person name="Choi S."/>
            <person name="Ohtsubo E."/>
            <person name="Baba T."/>
            <person name="Wanner B.L."/>
            <person name="Mori H."/>
            <person name="Horiuchi T."/>
        </authorList>
    </citation>
    <scope>NUCLEOTIDE SEQUENCE [LARGE SCALE GENOMIC DNA]</scope>
    <source>
        <strain>K12 / W3110 / ATCC 27325 / DSM 5911</strain>
    </source>
</reference>
<dbReference type="EMBL" id="U00096">
    <property type="protein sequence ID" value="AAC74974.1"/>
    <property type="molecule type" value="Genomic_DNA"/>
</dbReference>
<dbReference type="EMBL" id="AP009048">
    <property type="protein sequence ID" value="BAE76550.1"/>
    <property type="molecule type" value="Genomic_DNA"/>
</dbReference>
<dbReference type="PIR" id="H64953">
    <property type="entry name" value="H64953"/>
</dbReference>
<dbReference type="RefSeq" id="NP_416417.1">
    <property type="nucleotide sequence ID" value="NC_000913.3"/>
</dbReference>
<dbReference type="RefSeq" id="WP_001237869.1">
    <property type="nucleotide sequence ID" value="NZ_SSZK01000001.1"/>
</dbReference>
<dbReference type="SMR" id="P76308"/>
<dbReference type="BioGRID" id="4260371">
    <property type="interactions" value="18"/>
</dbReference>
<dbReference type="FunCoup" id="P76308">
    <property type="interactions" value="7"/>
</dbReference>
<dbReference type="STRING" id="511145.b1904"/>
<dbReference type="PaxDb" id="511145-b1904"/>
<dbReference type="EnsemblBacteria" id="AAC74974">
    <property type="protein sequence ID" value="AAC74974"/>
    <property type="gene ID" value="b1904"/>
</dbReference>
<dbReference type="GeneID" id="946386"/>
<dbReference type="KEGG" id="ecj:JW1892"/>
<dbReference type="KEGG" id="eco:b1904"/>
<dbReference type="KEGG" id="ecoc:C3026_10810"/>
<dbReference type="PATRIC" id="fig|1411691.4.peg.345"/>
<dbReference type="EchoBASE" id="EB3790"/>
<dbReference type="eggNOG" id="ENOG5032V2W">
    <property type="taxonomic scope" value="Bacteria"/>
</dbReference>
<dbReference type="HOGENOM" id="CLU_145367_0_0_6"/>
<dbReference type="InParanoid" id="P76308"/>
<dbReference type="OMA" id="VTIQYKC"/>
<dbReference type="OrthoDB" id="8607336at2"/>
<dbReference type="PhylomeDB" id="P76308"/>
<dbReference type="BioCyc" id="EcoCyc:G7035-MONOMER"/>
<dbReference type="PRO" id="PR:P76308"/>
<dbReference type="Proteomes" id="UP000000625">
    <property type="component" value="Chromosome"/>
</dbReference>
<dbReference type="InterPro" id="IPR025731">
    <property type="entry name" value="YecR-like"/>
</dbReference>
<dbReference type="Pfam" id="PF13992">
    <property type="entry name" value="YecR"/>
    <property type="match status" value="1"/>
</dbReference>
<dbReference type="PROSITE" id="PS51257">
    <property type="entry name" value="PROKAR_LIPOPROTEIN"/>
    <property type="match status" value="1"/>
</dbReference>
<proteinExistence type="predicted"/>
<feature type="chain" id="PRO_0000169087" description="Uncharacterized protein YecR">
    <location>
        <begin position="1"/>
        <end position="107"/>
    </location>
</feature>
<gene>
    <name type="primary">yecR</name>
    <name type="ordered locus">b1904</name>
    <name type="ordered locus">JW1892</name>
</gene>